<feature type="chain" id="PRO_0000386221" description="GTPase Obg">
    <location>
        <begin position="1"/>
        <end position="390"/>
    </location>
</feature>
<feature type="domain" description="Obg" evidence="2">
    <location>
        <begin position="1"/>
        <end position="159"/>
    </location>
</feature>
<feature type="domain" description="OBG-type G" evidence="1">
    <location>
        <begin position="160"/>
        <end position="333"/>
    </location>
</feature>
<feature type="region of interest" description="Disordered" evidence="3">
    <location>
        <begin position="127"/>
        <end position="147"/>
    </location>
</feature>
<feature type="compositionally biased region" description="Polar residues" evidence="3">
    <location>
        <begin position="129"/>
        <end position="145"/>
    </location>
</feature>
<feature type="binding site" evidence="1">
    <location>
        <begin position="166"/>
        <end position="173"/>
    </location>
    <ligand>
        <name>GTP</name>
        <dbReference type="ChEBI" id="CHEBI:37565"/>
    </ligand>
</feature>
<feature type="binding site" evidence="1">
    <location>
        <position position="173"/>
    </location>
    <ligand>
        <name>Mg(2+)</name>
        <dbReference type="ChEBI" id="CHEBI:18420"/>
    </ligand>
</feature>
<feature type="binding site" evidence="1">
    <location>
        <begin position="191"/>
        <end position="195"/>
    </location>
    <ligand>
        <name>GTP</name>
        <dbReference type="ChEBI" id="CHEBI:37565"/>
    </ligand>
</feature>
<feature type="binding site" evidence="1">
    <location>
        <position position="193"/>
    </location>
    <ligand>
        <name>Mg(2+)</name>
        <dbReference type="ChEBI" id="CHEBI:18420"/>
    </ligand>
</feature>
<feature type="binding site" evidence="1">
    <location>
        <begin position="213"/>
        <end position="216"/>
    </location>
    <ligand>
        <name>GTP</name>
        <dbReference type="ChEBI" id="CHEBI:37565"/>
    </ligand>
</feature>
<feature type="binding site" evidence="1">
    <location>
        <begin position="283"/>
        <end position="286"/>
    </location>
    <ligand>
        <name>GTP</name>
        <dbReference type="ChEBI" id="CHEBI:37565"/>
    </ligand>
</feature>
<feature type="binding site" evidence="1">
    <location>
        <begin position="314"/>
        <end position="316"/>
    </location>
    <ligand>
        <name>GTP</name>
        <dbReference type="ChEBI" id="CHEBI:37565"/>
    </ligand>
</feature>
<dbReference type="EC" id="3.6.5.-" evidence="1"/>
<dbReference type="EMBL" id="AE017220">
    <property type="protein sequence ID" value="AAX67145.1"/>
    <property type="molecule type" value="Genomic_DNA"/>
</dbReference>
<dbReference type="SMR" id="Q57JG7"/>
<dbReference type="KEGG" id="sec:SCH_3239"/>
<dbReference type="HOGENOM" id="CLU_011747_2_0_6"/>
<dbReference type="Proteomes" id="UP000000538">
    <property type="component" value="Chromosome"/>
</dbReference>
<dbReference type="GO" id="GO:0005737">
    <property type="term" value="C:cytoplasm"/>
    <property type="evidence" value="ECO:0007669"/>
    <property type="project" value="UniProtKB-SubCell"/>
</dbReference>
<dbReference type="GO" id="GO:0005525">
    <property type="term" value="F:GTP binding"/>
    <property type="evidence" value="ECO:0007669"/>
    <property type="project" value="UniProtKB-UniRule"/>
</dbReference>
<dbReference type="GO" id="GO:0003924">
    <property type="term" value="F:GTPase activity"/>
    <property type="evidence" value="ECO:0007669"/>
    <property type="project" value="UniProtKB-UniRule"/>
</dbReference>
<dbReference type="GO" id="GO:0000287">
    <property type="term" value="F:magnesium ion binding"/>
    <property type="evidence" value="ECO:0007669"/>
    <property type="project" value="InterPro"/>
</dbReference>
<dbReference type="GO" id="GO:0042254">
    <property type="term" value="P:ribosome biogenesis"/>
    <property type="evidence" value="ECO:0007669"/>
    <property type="project" value="UniProtKB-UniRule"/>
</dbReference>
<dbReference type="CDD" id="cd01898">
    <property type="entry name" value="Obg"/>
    <property type="match status" value="1"/>
</dbReference>
<dbReference type="FunFam" id="2.70.210.12:FF:000001">
    <property type="entry name" value="GTPase Obg"/>
    <property type="match status" value="1"/>
</dbReference>
<dbReference type="FunFam" id="3.40.50.300:FF:000185">
    <property type="entry name" value="GTPase Obg"/>
    <property type="match status" value="1"/>
</dbReference>
<dbReference type="Gene3D" id="2.70.210.12">
    <property type="entry name" value="GTP1/OBG domain"/>
    <property type="match status" value="1"/>
</dbReference>
<dbReference type="Gene3D" id="3.40.50.300">
    <property type="entry name" value="P-loop containing nucleotide triphosphate hydrolases"/>
    <property type="match status" value="1"/>
</dbReference>
<dbReference type="HAMAP" id="MF_01454">
    <property type="entry name" value="GTPase_Obg"/>
    <property type="match status" value="1"/>
</dbReference>
<dbReference type="InterPro" id="IPR031167">
    <property type="entry name" value="G_OBG"/>
</dbReference>
<dbReference type="InterPro" id="IPR006073">
    <property type="entry name" value="GTP-bd"/>
</dbReference>
<dbReference type="InterPro" id="IPR014100">
    <property type="entry name" value="GTP-bd_Obg/CgtA"/>
</dbReference>
<dbReference type="InterPro" id="IPR006074">
    <property type="entry name" value="GTP1-OBG_CS"/>
</dbReference>
<dbReference type="InterPro" id="IPR006169">
    <property type="entry name" value="GTP1_OBG_dom"/>
</dbReference>
<dbReference type="InterPro" id="IPR036726">
    <property type="entry name" value="GTP1_OBG_dom_sf"/>
</dbReference>
<dbReference type="InterPro" id="IPR045086">
    <property type="entry name" value="OBG_GTPase"/>
</dbReference>
<dbReference type="InterPro" id="IPR027417">
    <property type="entry name" value="P-loop_NTPase"/>
</dbReference>
<dbReference type="NCBIfam" id="TIGR02729">
    <property type="entry name" value="Obg_CgtA"/>
    <property type="match status" value="1"/>
</dbReference>
<dbReference type="NCBIfam" id="NF008955">
    <property type="entry name" value="PRK12297.1"/>
    <property type="match status" value="1"/>
</dbReference>
<dbReference type="NCBIfam" id="NF008956">
    <property type="entry name" value="PRK12299.1"/>
    <property type="match status" value="1"/>
</dbReference>
<dbReference type="PANTHER" id="PTHR11702">
    <property type="entry name" value="DEVELOPMENTALLY REGULATED GTP-BINDING PROTEIN-RELATED"/>
    <property type="match status" value="1"/>
</dbReference>
<dbReference type="PANTHER" id="PTHR11702:SF31">
    <property type="entry name" value="MITOCHONDRIAL RIBOSOME-ASSOCIATED GTPASE 2"/>
    <property type="match status" value="1"/>
</dbReference>
<dbReference type="Pfam" id="PF01018">
    <property type="entry name" value="GTP1_OBG"/>
    <property type="match status" value="1"/>
</dbReference>
<dbReference type="Pfam" id="PF01926">
    <property type="entry name" value="MMR_HSR1"/>
    <property type="match status" value="1"/>
</dbReference>
<dbReference type="PIRSF" id="PIRSF002401">
    <property type="entry name" value="GTP_bd_Obg/CgtA"/>
    <property type="match status" value="1"/>
</dbReference>
<dbReference type="PRINTS" id="PR00326">
    <property type="entry name" value="GTP1OBG"/>
</dbReference>
<dbReference type="SUPFAM" id="SSF82051">
    <property type="entry name" value="Obg GTP-binding protein N-terminal domain"/>
    <property type="match status" value="1"/>
</dbReference>
<dbReference type="SUPFAM" id="SSF52540">
    <property type="entry name" value="P-loop containing nucleoside triphosphate hydrolases"/>
    <property type="match status" value="1"/>
</dbReference>
<dbReference type="PROSITE" id="PS51710">
    <property type="entry name" value="G_OBG"/>
    <property type="match status" value="1"/>
</dbReference>
<dbReference type="PROSITE" id="PS00905">
    <property type="entry name" value="GTP1_OBG"/>
    <property type="match status" value="1"/>
</dbReference>
<dbReference type="PROSITE" id="PS51883">
    <property type="entry name" value="OBG"/>
    <property type="match status" value="1"/>
</dbReference>
<sequence>MKFVDEASILVVAGDGGNGCVSFRREKYIPKGGPDGGDGGDGGDVWMEADENLNTLIDYRFEKSFRAERGQNGASRDCTGKRGKDVTIKVPVGTRVIDQGTGETMGDMTKHGQRLLVAKGGWHGLGNTRFKSSVNRTPRQKTNGTPGDKRDLLLELMLLADVGMLGMPNAGKSTFIRAVSAAKPKVADYPFTTLVPSLGVVRMDSEKSFVVADIPGLIEGAAEGAGLGIRFLKHLERCRVLLHLIDIDPIDGSDPVENARIIIGELEKYSQDLAAKPRWLVFNKIDLMDKTEAEEKAKAIAEALGWEGKYYLISAASQLGVKDLCWDVMTFIIENPIAQAEEAKQPEKVEFMWDDYHRQQLAEVEEDADDDWDDDWDEDDEEGVEFIYKR</sequence>
<organism>
    <name type="scientific">Salmonella choleraesuis (strain SC-B67)</name>
    <dbReference type="NCBI Taxonomy" id="321314"/>
    <lineage>
        <taxon>Bacteria</taxon>
        <taxon>Pseudomonadati</taxon>
        <taxon>Pseudomonadota</taxon>
        <taxon>Gammaproteobacteria</taxon>
        <taxon>Enterobacterales</taxon>
        <taxon>Enterobacteriaceae</taxon>
        <taxon>Salmonella</taxon>
    </lineage>
</organism>
<accession>Q57JG7</accession>
<protein>
    <recommendedName>
        <fullName evidence="1">GTPase Obg</fullName>
        <ecNumber evidence="1">3.6.5.-</ecNumber>
    </recommendedName>
    <alternativeName>
        <fullName evidence="1">GTP-binding protein Obg</fullName>
    </alternativeName>
</protein>
<gene>
    <name evidence="1" type="primary">obg</name>
    <name type="ordered locus">SCH_3239</name>
</gene>
<reference key="1">
    <citation type="journal article" date="2005" name="Nucleic Acids Res.">
        <title>The genome sequence of Salmonella enterica serovar Choleraesuis, a highly invasive and resistant zoonotic pathogen.</title>
        <authorList>
            <person name="Chiu C.-H."/>
            <person name="Tang P."/>
            <person name="Chu C."/>
            <person name="Hu S."/>
            <person name="Bao Q."/>
            <person name="Yu J."/>
            <person name="Chou Y.-Y."/>
            <person name="Wang H.-S."/>
            <person name="Lee Y.-S."/>
        </authorList>
    </citation>
    <scope>NUCLEOTIDE SEQUENCE [LARGE SCALE GENOMIC DNA]</scope>
    <source>
        <strain>SC-B67</strain>
    </source>
</reference>
<proteinExistence type="inferred from homology"/>
<evidence type="ECO:0000255" key="1">
    <source>
        <dbReference type="HAMAP-Rule" id="MF_01454"/>
    </source>
</evidence>
<evidence type="ECO:0000255" key="2">
    <source>
        <dbReference type="PROSITE-ProRule" id="PRU01231"/>
    </source>
</evidence>
<evidence type="ECO:0000256" key="3">
    <source>
        <dbReference type="SAM" id="MobiDB-lite"/>
    </source>
</evidence>
<keyword id="KW-0963">Cytoplasm</keyword>
<keyword id="KW-0342">GTP-binding</keyword>
<keyword id="KW-0378">Hydrolase</keyword>
<keyword id="KW-0460">Magnesium</keyword>
<keyword id="KW-0479">Metal-binding</keyword>
<keyword id="KW-0547">Nucleotide-binding</keyword>
<comment type="function">
    <text evidence="1">An essential GTPase which binds GTP, GDP and possibly (p)ppGpp with moderate affinity, with high nucleotide exchange rates and a fairly low GTP hydrolysis rate. Plays a role in control of the cell cycle, stress response, ribosome biogenesis and in those bacteria that undergo differentiation, in morphogenesis control.</text>
</comment>
<comment type="cofactor">
    <cofactor evidence="1">
        <name>Mg(2+)</name>
        <dbReference type="ChEBI" id="CHEBI:18420"/>
    </cofactor>
</comment>
<comment type="subunit">
    <text evidence="1">Monomer.</text>
</comment>
<comment type="subcellular location">
    <subcellularLocation>
        <location evidence="1">Cytoplasm</location>
    </subcellularLocation>
</comment>
<comment type="similarity">
    <text evidence="1">Belongs to the TRAFAC class OBG-HflX-like GTPase superfamily. OBG GTPase family.</text>
</comment>
<name>OBG_SALCH</name>